<sequence>MDFQDIIFLMMDIKIEIYQDEKDMEKTEVAVKTEKTAIPFKWENPLEDTYTKMGYSESSPISAGGTFMG</sequence>
<comment type="sequence caution" evidence="1">
    <conflict type="erroneous initiation">
        <sequence resource="EMBL-CDS" id="AAF13657"/>
    </conflict>
</comment>
<name>Y6559_BACAN</name>
<proteinExistence type="predicted"/>
<gene>
    <name type="ordered locus">pXO2-52</name>
    <name type="ordered locus">BXB0059</name>
    <name type="ordered locus">GBAA_pXO2_0059</name>
</gene>
<geneLocation type="plasmid">
    <name>pXO2</name>
</geneLocation>
<protein>
    <recommendedName>
        <fullName>Uncharacterized protein pXO2-52/BXB0059/GBAA_pXO2_0059</fullName>
    </recommendedName>
</protein>
<keyword id="KW-0614">Plasmid</keyword>
<keyword id="KW-1185">Reference proteome</keyword>
<reference key="1">
    <citation type="journal article" date="1999" name="J. Appl. Microbiol.">
        <title>Sequence, assembly and analysis of pXO1 and pXO2.</title>
        <authorList>
            <person name="Okinaka R.T."/>
            <person name="Cloud K."/>
            <person name="Hampton O."/>
            <person name="Hoffmaster A."/>
            <person name="Hill K.K."/>
            <person name="Keim P."/>
            <person name="Koehler T."/>
            <person name="Lamke G."/>
            <person name="Kumano S."/>
            <person name="Manter D."/>
            <person name="Martinez Y."/>
            <person name="Ricke D."/>
            <person name="Svensson R."/>
            <person name="Jackson P.J."/>
        </authorList>
    </citation>
    <scope>NUCLEOTIDE SEQUENCE [GENOMIC DNA]</scope>
    <source>
        <strain>Pasteur</strain>
    </source>
</reference>
<reference key="2">
    <citation type="journal article" date="2002" name="Science">
        <title>Comparative genome sequencing for discovery of novel polymorphisms in Bacillus anthracis.</title>
        <authorList>
            <person name="Read T.D."/>
            <person name="Salzberg S.L."/>
            <person name="Pop M."/>
            <person name="Shumway M.F."/>
            <person name="Umayam L."/>
            <person name="Jiang L."/>
            <person name="Holtzapple E."/>
            <person name="Busch J.D."/>
            <person name="Smith K.L."/>
            <person name="Schupp J.M."/>
            <person name="Solomon D."/>
            <person name="Keim P."/>
            <person name="Fraser C.M."/>
        </authorList>
    </citation>
    <scope>NUCLEOTIDE SEQUENCE [GENOMIC DNA]</scope>
    <source>
        <strain>Ames / isolate Florida / A2012</strain>
    </source>
</reference>
<reference key="3">
    <citation type="journal article" date="2009" name="J. Bacteriol.">
        <title>The complete genome sequence of Bacillus anthracis Ames 'Ancestor'.</title>
        <authorList>
            <person name="Ravel J."/>
            <person name="Jiang L."/>
            <person name="Stanley S.T."/>
            <person name="Wilson M.R."/>
            <person name="Decker R.S."/>
            <person name="Read T.D."/>
            <person name="Worsham P."/>
            <person name="Keim P.S."/>
            <person name="Salzberg S.L."/>
            <person name="Fraser-Liggett C.M."/>
            <person name="Rasko D.A."/>
        </authorList>
    </citation>
    <scope>NUCLEOTIDE SEQUENCE [LARGE SCALE GENOMIC DNA]</scope>
    <source>
        <strain>Ames ancestor</strain>
    </source>
</reference>
<organism>
    <name type="scientific">Bacillus anthracis</name>
    <dbReference type="NCBI Taxonomy" id="1392"/>
    <lineage>
        <taxon>Bacteria</taxon>
        <taxon>Bacillati</taxon>
        <taxon>Bacillota</taxon>
        <taxon>Bacilli</taxon>
        <taxon>Bacillales</taxon>
        <taxon>Bacillaceae</taxon>
        <taxon>Bacillus</taxon>
        <taxon>Bacillus cereus group</taxon>
    </lineage>
</organism>
<accession>Q9RMY0</accession>
<feature type="chain" id="PRO_0000216854" description="Uncharacterized protein pXO2-52/BXB0059/GBAA_pXO2_0059">
    <location>
        <begin position="1"/>
        <end position="69"/>
    </location>
</feature>
<dbReference type="EMBL" id="AF188935">
    <property type="protein sequence ID" value="AAF13657.1"/>
    <property type="status" value="ALT_INIT"/>
    <property type="molecule type" value="Genomic_DNA"/>
</dbReference>
<dbReference type="EMBL" id="AE011191">
    <property type="protein sequence ID" value="AAM26215.1"/>
    <property type="molecule type" value="Genomic_DNA"/>
</dbReference>
<dbReference type="EMBL" id="AE017335">
    <property type="protein sequence ID" value="AAT28989.2"/>
    <property type="molecule type" value="Genomic_DNA"/>
</dbReference>
<dbReference type="RefSeq" id="NP_053207.1">
    <property type="nucleotide sequence ID" value="NC_002146.1"/>
</dbReference>
<dbReference type="RefSeq" id="WP_000347298.1">
    <property type="nucleotide sequence ID" value="NC_002146.1"/>
</dbReference>
<dbReference type="GeneID" id="39682767"/>
<dbReference type="KEGG" id="banh:HYU01_29275"/>
<dbReference type="KEGG" id="bar:GBAA_pXO2_0059"/>
<dbReference type="HOGENOM" id="CLU_2931222_0_0_9"/>
<dbReference type="Proteomes" id="UP000000594">
    <property type="component" value="Plasmid pXO2"/>
</dbReference>
<evidence type="ECO:0000305" key="1"/>